<sequence length="379" mass="39239">MTAPAGFLPRVGRLIAVALTAVFLLAPTGAEAASRIKDLADFEGVRDNILVGYGLVVGLKGTGDKLDDVTFTKESLIGMLERLGVNTREGKLDPDNVAAVMVTGTLPPFARQGSRIDVTISALGTAKSLAGGTLMVTPLIGADGEVYAVAQGQAQIGGYAVQGQSASVQKGVPTSGRIPNGALVEAEVPFNLSAMESVKISLRNPDFTTARRIAQAINAFLGTELARPLDPGTVLVAVTAGYEGNAVALLTDIEQLLVEPDTVARVVIDEATGTIVIGEKVRINTVAIAQGNLTIRVTETPQVSQPAPFSQGGQTAVVPRTNIQVDEGKDNKLTVVNGGVNLQDLVNSLNALGVGPRDMISILQAIKSAGAMQAEIQVM</sequence>
<comment type="function">
    <text evidence="1">Assembles around the rod to form the L-ring and probably protects the motor/basal body from shearing forces during rotation.</text>
</comment>
<comment type="subunit">
    <text evidence="1">The basal body constitutes a major portion of the flagellar organelle and consists of four rings (L,P,S, and M) mounted on a central rod.</text>
</comment>
<comment type="subcellular location">
    <subcellularLocation>
        <location evidence="1">Periplasm</location>
    </subcellularLocation>
    <subcellularLocation>
        <location evidence="1">Bacterial flagellum basal body</location>
    </subcellularLocation>
</comment>
<comment type="similarity">
    <text evidence="1">Belongs to the FlgI family.</text>
</comment>
<comment type="sequence caution" evidence="2">
    <conflict type="erroneous initiation">
        <sequence resource="EMBL-CDS" id="ABC23646"/>
    </conflict>
</comment>
<name>FLGI_RHORT</name>
<reference key="1">
    <citation type="journal article" date="2011" name="Stand. Genomic Sci.">
        <title>Complete genome sequence of Rhodospirillum rubrum type strain (S1).</title>
        <authorList>
            <person name="Munk A.C."/>
            <person name="Copeland A."/>
            <person name="Lucas S."/>
            <person name="Lapidus A."/>
            <person name="Del Rio T.G."/>
            <person name="Barry K."/>
            <person name="Detter J.C."/>
            <person name="Hammon N."/>
            <person name="Israni S."/>
            <person name="Pitluck S."/>
            <person name="Brettin T."/>
            <person name="Bruce D."/>
            <person name="Han C."/>
            <person name="Tapia R."/>
            <person name="Gilna P."/>
            <person name="Schmutz J."/>
            <person name="Larimer F."/>
            <person name="Land M."/>
            <person name="Kyrpides N.C."/>
            <person name="Mavromatis K."/>
            <person name="Richardson P."/>
            <person name="Rohde M."/>
            <person name="Goeker M."/>
            <person name="Klenk H.P."/>
            <person name="Zhang Y."/>
            <person name="Roberts G.P."/>
            <person name="Reslewic S."/>
            <person name="Schwartz D.C."/>
        </authorList>
    </citation>
    <scope>NUCLEOTIDE SEQUENCE [LARGE SCALE GENOMIC DNA]</scope>
    <source>
        <strain>ATCC 11170 / ATH 1.1.1 / DSM 467 / LMG 4362 / NCIMB 8255 / S1</strain>
    </source>
</reference>
<dbReference type="EMBL" id="CP000230">
    <property type="protein sequence ID" value="ABC23646.1"/>
    <property type="status" value="ALT_INIT"/>
    <property type="molecule type" value="Genomic_DNA"/>
</dbReference>
<dbReference type="RefSeq" id="YP_427933.1">
    <property type="nucleotide sequence ID" value="NC_007643.1"/>
</dbReference>
<dbReference type="SMR" id="Q2RQE9"/>
<dbReference type="STRING" id="269796.Rru_A2849"/>
<dbReference type="EnsemblBacteria" id="ABC23646">
    <property type="protein sequence ID" value="ABC23646"/>
    <property type="gene ID" value="Rru_A2849"/>
</dbReference>
<dbReference type="KEGG" id="rru:Rru_A2849"/>
<dbReference type="PATRIC" id="fig|269796.9.peg.2956"/>
<dbReference type="eggNOG" id="COG1706">
    <property type="taxonomic scope" value="Bacteria"/>
</dbReference>
<dbReference type="HOGENOM" id="CLU_045235_1_0_5"/>
<dbReference type="PhylomeDB" id="Q2RQE9"/>
<dbReference type="Proteomes" id="UP000001929">
    <property type="component" value="Chromosome"/>
</dbReference>
<dbReference type="GO" id="GO:0009428">
    <property type="term" value="C:bacterial-type flagellum basal body, distal rod, P ring"/>
    <property type="evidence" value="ECO:0007669"/>
    <property type="project" value="InterPro"/>
</dbReference>
<dbReference type="GO" id="GO:0030288">
    <property type="term" value="C:outer membrane-bounded periplasmic space"/>
    <property type="evidence" value="ECO:0007669"/>
    <property type="project" value="InterPro"/>
</dbReference>
<dbReference type="GO" id="GO:0005198">
    <property type="term" value="F:structural molecule activity"/>
    <property type="evidence" value="ECO:0007669"/>
    <property type="project" value="InterPro"/>
</dbReference>
<dbReference type="GO" id="GO:0071973">
    <property type="term" value="P:bacterial-type flagellum-dependent cell motility"/>
    <property type="evidence" value="ECO:0007669"/>
    <property type="project" value="InterPro"/>
</dbReference>
<dbReference type="HAMAP" id="MF_00416">
    <property type="entry name" value="FlgI"/>
    <property type="match status" value="1"/>
</dbReference>
<dbReference type="InterPro" id="IPR001782">
    <property type="entry name" value="Flag_FlgI"/>
</dbReference>
<dbReference type="NCBIfam" id="NF003676">
    <property type="entry name" value="PRK05303.1"/>
    <property type="match status" value="1"/>
</dbReference>
<dbReference type="PANTHER" id="PTHR30381">
    <property type="entry name" value="FLAGELLAR P-RING PERIPLASMIC PROTEIN FLGI"/>
    <property type="match status" value="1"/>
</dbReference>
<dbReference type="PANTHER" id="PTHR30381:SF0">
    <property type="entry name" value="FLAGELLAR P-RING PROTEIN"/>
    <property type="match status" value="1"/>
</dbReference>
<dbReference type="Pfam" id="PF02119">
    <property type="entry name" value="FlgI"/>
    <property type="match status" value="1"/>
</dbReference>
<dbReference type="PRINTS" id="PR01010">
    <property type="entry name" value="FLGPRINGFLGI"/>
</dbReference>
<evidence type="ECO:0000255" key="1">
    <source>
        <dbReference type="HAMAP-Rule" id="MF_00416"/>
    </source>
</evidence>
<evidence type="ECO:0000305" key="2"/>
<feature type="signal peptide" evidence="1">
    <location>
        <begin position="1"/>
        <end position="32"/>
    </location>
</feature>
<feature type="chain" id="PRO_0000236317" description="Flagellar P-ring protein">
    <location>
        <begin position="33"/>
        <end position="379"/>
    </location>
</feature>
<keyword id="KW-0975">Bacterial flagellum</keyword>
<keyword id="KW-0574">Periplasm</keyword>
<keyword id="KW-1185">Reference proteome</keyword>
<keyword id="KW-0732">Signal</keyword>
<proteinExistence type="inferred from homology"/>
<organism>
    <name type="scientific">Rhodospirillum rubrum (strain ATCC 11170 / ATH 1.1.1 / DSM 467 / LMG 4362 / NCIMB 8255 / S1)</name>
    <dbReference type="NCBI Taxonomy" id="269796"/>
    <lineage>
        <taxon>Bacteria</taxon>
        <taxon>Pseudomonadati</taxon>
        <taxon>Pseudomonadota</taxon>
        <taxon>Alphaproteobacteria</taxon>
        <taxon>Rhodospirillales</taxon>
        <taxon>Rhodospirillaceae</taxon>
        <taxon>Rhodospirillum</taxon>
    </lineage>
</organism>
<gene>
    <name evidence="1" type="primary">flgI</name>
    <name type="ordered locus">Rru_A2849</name>
</gene>
<accession>Q2RQE9</accession>
<protein>
    <recommendedName>
        <fullName evidence="1">Flagellar P-ring protein</fullName>
    </recommendedName>
    <alternativeName>
        <fullName evidence="1">Basal body P-ring protein</fullName>
    </alternativeName>
</protein>